<accession>P73307</accession>
<proteinExistence type="inferred from homology"/>
<protein>
    <recommendedName>
        <fullName evidence="1">Small ribosomal subunit protein uS8</fullName>
    </recommendedName>
    <alternativeName>
        <fullName evidence="2">30S ribosomal protein S8</fullName>
    </alternativeName>
</protein>
<dbReference type="EMBL" id="BA000022">
    <property type="protein sequence ID" value="BAA17336.1"/>
    <property type="molecule type" value="Genomic_DNA"/>
</dbReference>
<dbReference type="PIR" id="S77489">
    <property type="entry name" value="S77489"/>
</dbReference>
<dbReference type="SMR" id="P73307"/>
<dbReference type="FunCoup" id="P73307">
    <property type="interactions" value="406"/>
</dbReference>
<dbReference type="STRING" id="1148.gene:10498199"/>
<dbReference type="PaxDb" id="1148-1652414"/>
<dbReference type="EnsemblBacteria" id="BAA17336">
    <property type="protein sequence ID" value="BAA17336"/>
    <property type="gene ID" value="BAA17336"/>
</dbReference>
<dbReference type="KEGG" id="syn:sll1809"/>
<dbReference type="eggNOG" id="COG0096">
    <property type="taxonomic scope" value="Bacteria"/>
</dbReference>
<dbReference type="InParanoid" id="P73307"/>
<dbReference type="PhylomeDB" id="P73307"/>
<dbReference type="Proteomes" id="UP000001425">
    <property type="component" value="Chromosome"/>
</dbReference>
<dbReference type="GO" id="GO:0022627">
    <property type="term" value="C:cytosolic small ribosomal subunit"/>
    <property type="evidence" value="ECO:0000318"/>
    <property type="project" value="GO_Central"/>
</dbReference>
<dbReference type="GO" id="GO:0019843">
    <property type="term" value="F:rRNA binding"/>
    <property type="evidence" value="ECO:0007669"/>
    <property type="project" value="UniProtKB-UniRule"/>
</dbReference>
<dbReference type="GO" id="GO:0003735">
    <property type="term" value="F:structural constituent of ribosome"/>
    <property type="evidence" value="ECO:0000318"/>
    <property type="project" value="GO_Central"/>
</dbReference>
<dbReference type="GO" id="GO:0006412">
    <property type="term" value="P:translation"/>
    <property type="evidence" value="ECO:0007669"/>
    <property type="project" value="UniProtKB-UniRule"/>
</dbReference>
<dbReference type="FunFam" id="3.30.1370.30:FF:000002">
    <property type="entry name" value="30S ribosomal protein S8"/>
    <property type="match status" value="1"/>
</dbReference>
<dbReference type="FunFam" id="3.30.1490.10:FF:000001">
    <property type="entry name" value="30S ribosomal protein S8"/>
    <property type="match status" value="1"/>
</dbReference>
<dbReference type="Gene3D" id="3.30.1370.30">
    <property type="match status" value="1"/>
</dbReference>
<dbReference type="Gene3D" id="3.30.1490.10">
    <property type="match status" value="1"/>
</dbReference>
<dbReference type="HAMAP" id="MF_01302_B">
    <property type="entry name" value="Ribosomal_uS8_B"/>
    <property type="match status" value="1"/>
</dbReference>
<dbReference type="InterPro" id="IPR000630">
    <property type="entry name" value="Ribosomal_uS8"/>
</dbReference>
<dbReference type="InterPro" id="IPR047863">
    <property type="entry name" value="Ribosomal_uS8_CS"/>
</dbReference>
<dbReference type="InterPro" id="IPR035987">
    <property type="entry name" value="Ribosomal_uS8_sf"/>
</dbReference>
<dbReference type="NCBIfam" id="NF001109">
    <property type="entry name" value="PRK00136.1"/>
    <property type="match status" value="1"/>
</dbReference>
<dbReference type="PANTHER" id="PTHR11758">
    <property type="entry name" value="40S RIBOSOMAL PROTEIN S15A"/>
    <property type="match status" value="1"/>
</dbReference>
<dbReference type="Pfam" id="PF00410">
    <property type="entry name" value="Ribosomal_S8"/>
    <property type="match status" value="1"/>
</dbReference>
<dbReference type="SUPFAM" id="SSF56047">
    <property type="entry name" value="Ribosomal protein S8"/>
    <property type="match status" value="1"/>
</dbReference>
<dbReference type="PROSITE" id="PS00053">
    <property type="entry name" value="RIBOSOMAL_S8"/>
    <property type="match status" value="1"/>
</dbReference>
<organism>
    <name type="scientific">Synechocystis sp. (strain ATCC 27184 / PCC 6803 / Kazusa)</name>
    <dbReference type="NCBI Taxonomy" id="1111708"/>
    <lineage>
        <taxon>Bacteria</taxon>
        <taxon>Bacillati</taxon>
        <taxon>Cyanobacteriota</taxon>
        <taxon>Cyanophyceae</taxon>
        <taxon>Synechococcales</taxon>
        <taxon>Merismopediaceae</taxon>
        <taxon>Synechocystis</taxon>
    </lineage>
</organism>
<sequence length="133" mass="14666">MASTDTISDMLTRIRNACAVRHSTTQVPTTKMTLSIAKVLKSEGFIEDYSETGEGINKMLVLTLKYKGKTRQPLINTLQRVSKPGLRVYSPSKKIPRVLGGIGIAIVSTSHGIMTDREARRQGIGGEILCYIW</sequence>
<keyword id="KW-1185">Reference proteome</keyword>
<keyword id="KW-0687">Ribonucleoprotein</keyword>
<keyword id="KW-0689">Ribosomal protein</keyword>
<keyword id="KW-0694">RNA-binding</keyword>
<keyword id="KW-0699">rRNA-binding</keyword>
<name>RS8_SYNY3</name>
<gene>
    <name evidence="1" type="primary">rpsH</name>
    <name evidence="1" type="synonym">rps8</name>
    <name type="ordered locus">sll1809</name>
</gene>
<comment type="function">
    <text evidence="1">One of the primary rRNA binding proteins, it binds directly to 16S rRNA central domain where it helps coordinate assembly of the platform of the 30S subunit.</text>
</comment>
<comment type="subunit">
    <text evidence="1">Part of the 30S ribosomal subunit. Contacts proteins S5 and S12.</text>
</comment>
<comment type="similarity">
    <text evidence="1">Belongs to the universal ribosomal protein uS8 family.</text>
</comment>
<reference key="1">
    <citation type="journal article" date="1996" name="DNA Res.">
        <title>Sequence analysis of the genome of the unicellular cyanobacterium Synechocystis sp. strain PCC6803. II. Sequence determination of the entire genome and assignment of potential protein-coding regions.</title>
        <authorList>
            <person name="Kaneko T."/>
            <person name="Sato S."/>
            <person name="Kotani H."/>
            <person name="Tanaka A."/>
            <person name="Asamizu E."/>
            <person name="Nakamura Y."/>
            <person name="Miyajima N."/>
            <person name="Hirosawa M."/>
            <person name="Sugiura M."/>
            <person name="Sasamoto S."/>
            <person name="Kimura T."/>
            <person name="Hosouchi T."/>
            <person name="Matsuno A."/>
            <person name="Muraki A."/>
            <person name="Nakazaki N."/>
            <person name="Naruo K."/>
            <person name="Okumura S."/>
            <person name="Shimpo S."/>
            <person name="Takeuchi C."/>
            <person name="Wada T."/>
            <person name="Watanabe A."/>
            <person name="Yamada M."/>
            <person name="Yasuda M."/>
            <person name="Tabata S."/>
        </authorList>
    </citation>
    <scope>NUCLEOTIDE SEQUENCE [LARGE SCALE GENOMIC DNA]</scope>
    <source>
        <strain>ATCC 27184 / PCC 6803 / Kazusa</strain>
    </source>
</reference>
<feature type="chain" id="PRO_0000126508" description="Small ribosomal subunit protein uS8">
    <location>
        <begin position="1"/>
        <end position="133"/>
    </location>
</feature>
<evidence type="ECO:0000255" key="1">
    <source>
        <dbReference type="HAMAP-Rule" id="MF_01302"/>
    </source>
</evidence>
<evidence type="ECO:0000305" key="2"/>